<evidence type="ECO:0000255" key="1">
    <source>
        <dbReference type="HAMAP-Rule" id="MF_01366"/>
    </source>
</evidence>
<evidence type="ECO:0000305" key="2"/>
<name>RL13_RALPJ</name>
<organism>
    <name type="scientific">Ralstonia pickettii (strain 12J)</name>
    <dbReference type="NCBI Taxonomy" id="402626"/>
    <lineage>
        <taxon>Bacteria</taxon>
        <taxon>Pseudomonadati</taxon>
        <taxon>Pseudomonadota</taxon>
        <taxon>Betaproteobacteria</taxon>
        <taxon>Burkholderiales</taxon>
        <taxon>Burkholderiaceae</taxon>
        <taxon>Ralstonia</taxon>
    </lineage>
</organism>
<accession>B2UFK1</accession>
<sequence length="142" mass="15961">MKTFSAKPHEVKRDWYVIDATDKVLGRVASEVAHRLRGKHKPEFTPHVDTGDFIIVINAAKLRVTGAKTTDKKYYRHSGYPGGIYETTFGKMQQRFPGRALEKAVKGMLPKGPLGYAMIKKLKVYAEGSHPHEAQQPKALEI</sequence>
<reference key="1">
    <citation type="submission" date="2008-05" db="EMBL/GenBank/DDBJ databases">
        <title>Complete sequence of chromosome 1 of Ralstonia pickettii 12J.</title>
        <authorList>
            <person name="Lucas S."/>
            <person name="Copeland A."/>
            <person name="Lapidus A."/>
            <person name="Glavina del Rio T."/>
            <person name="Dalin E."/>
            <person name="Tice H."/>
            <person name="Bruce D."/>
            <person name="Goodwin L."/>
            <person name="Pitluck S."/>
            <person name="Meincke L."/>
            <person name="Brettin T."/>
            <person name="Detter J.C."/>
            <person name="Han C."/>
            <person name="Kuske C.R."/>
            <person name="Schmutz J."/>
            <person name="Larimer F."/>
            <person name="Land M."/>
            <person name="Hauser L."/>
            <person name="Kyrpides N."/>
            <person name="Mikhailova N."/>
            <person name="Marsh T."/>
            <person name="Richardson P."/>
        </authorList>
    </citation>
    <scope>NUCLEOTIDE SEQUENCE [LARGE SCALE GENOMIC DNA]</scope>
    <source>
        <strain>12J</strain>
    </source>
</reference>
<feature type="chain" id="PRO_1000144168" description="Large ribosomal subunit protein uL13">
    <location>
        <begin position="1"/>
        <end position="142"/>
    </location>
</feature>
<gene>
    <name evidence="1" type="primary">rplM</name>
    <name type="ordered locus">Rpic_0366</name>
</gene>
<keyword id="KW-0687">Ribonucleoprotein</keyword>
<keyword id="KW-0689">Ribosomal protein</keyword>
<dbReference type="EMBL" id="CP001068">
    <property type="protein sequence ID" value="ACD25524.1"/>
    <property type="molecule type" value="Genomic_DNA"/>
</dbReference>
<dbReference type="SMR" id="B2UFK1"/>
<dbReference type="STRING" id="402626.Rpic_0366"/>
<dbReference type="KEGG" id="rpi:Rpic_0366"/>
<dbReference type="eggNOG" id="COG0102">
    <property type="taxonomic scope" value="Bacteria"/>
</dbReference>
<dbReference type="HOGENOM" id="CLU_082184_2_2_4"/>
<dbReference type="GO" id="GO:0022625">
    <property type="term" value="C:cytosolic large ribosomal subunit"/>
    <property type="evidence" value="ECO:0007669"/>
    <property type="project" value="TreeGrafter"/>
</dbReference>
<dbReference type="GO" id="GO:0003729">
    <property type="term" value="F:mRNA binding"/>
    <property type="evidence" value="ECO:0007669"/>
    <property type="project" value="TreeGrafter"/>
</dbReference>
<dbReference type="GO" id="GO:0003735">
    <property type="term" value="F:structural constituent of ribosome"/>
    <property type="evidence" value="ECO:0007669"/>
    <property type="project" value="InterPro"/>
</dbReference>
<dbReference type="GO" id="GO:0017148">
    <property type="term" value="P:negative regulation of translation"/>
    <property type="evidence" value="ECO:0007669"/>
    <property type="project" value="TreeGrafter"/>
</dbReference>
<dbReference type="GO" id="GO:0006412">
    <property type="term" value="P:translation"/>
    <property type="evidence" value="ECO:0007669"/>
    <property type="project" value="UniProtKB-UniRule"/>
</dbReference>
<dbReference type="CDD" id="cd00392">
    <property type="entry name" value="Ribosomal_L13"/>
    <property type="match status" value="1"/>
</dbReference>
<dbReference type="FunFam" id="3.90.1180.10:FF:000001">
    <property type="entry name" value="50S ribosomal protein L13"/>
    <property type="match status" value="1"/>
</dbReference>
<dbReference type="Gene3D" id="3.90.1180.10">
    <property type="entry name" value="Ribosomal protein L13"/>
    <property type="match status" value="1"/>
</dbReference>
<dbReference type="HAMAP" id="MF_01366">
    <property type="entry name" value="Ribosomal_uL13"/>
    <property type="match status" value="1"/>
</dbReference>
<dbReference type="InterPro" id="IPR005822">
    <property type="entry name" value="Ribosomal_uL13"/>
</dbReference>
<dbReference type="InterPro" id="IPR005823">
    <property type="entry name" value="Ribosomal_uL13_bac-type"/>
</dbReference>
<dbReference type="InterPro" id="IPR036899">
    <property type="entry name" value="Ribosomal_uL13_sf"/>
</dbReference>
<dbReference type="NCBIfam" id="TIGR01066">
    <property type="entry name" value="rplM_bact"/>
    <property type="match status" value="1"/>
</dbReference>
<dbReference type="PANTHER" id="PTHR11545:SF2">
    <property type="entry name" value="LARGE RIBOSOMAL SUBUNIT PROTEIN UL13M"/>
    <property type="match status" value="1"/>
</dbReference>
<dbReference type="PANTHER" id="PTHR11545">
    <property type="entry name" value="RIBOSOMAL PROTEIN L13"/>
    <property type="match status" value="1"/>
</dbReference>
<dbReference type="Pfam" id="PF00572">
    <property type="entry name" value="Ribosomal_L13"/>
    <property type="match status" value="1"/>
</dbReference>
<dbReference type="PIRSF" id="PIRSF002181">
    <property type="entry name" value="Ribosomal_L13"/>
    <property type="match status" value="1"/>
</dbReference>
<dbReference type="SUPFAM" id="SSF52161">
    <property type="entry name" value="Ribosomal protein L13"/>
    <property type="match status" value="1"/>
</dbReference>
<protein>
    <recommendedName>
        <fullName evidence="1">Large ribosomal subunit protein uL13</fullName>
    </recommendedName>
    <alternativeName>
        <fullName evidence="2">50S ribosomal protein L13</fullName>
    </alternativeName>
</protein>
<proteinExistence type="inferred from homology"/>
<comment type="function">
    <text evidence="1">This protein is one of the early assembly proteins of the 50S ribosomal subunit, although it is not seen to bind rRNA by itself. It is important during the early stages of 50S assembly.</text>
</comment>
<comment type="subunit">
    <text evidence="1">Part of the 50S ribosomal subunit.</text>
</comment>
<comment type="similarity">
    <text evidence="1">Belongs to the universal ribosomal protein uL13 family.</text>
</comment>